<organism>
    <name type="scientific">Saccharolobus solfataricus (strain ATCC 35092 / DSM 1617 / JCM 11322 / P2)</name>
    <name type="common">Sulfolobus solfataricus</name>
    <dbReference type="NCBI Taxonomy" id="273057"/>
    <lineage>
        <taxon>Archaea</taxon>
        <taxon>Thermoproteota</taxon>
        <taxon>Thermoprotei</taxon>
        <taxon>Sulfolobales</taxon>
        <taxon>Sulfolobaceae</taxon>
        <taxon>Saccharolobus</taxon>
    </lineage>
</organism>
<evidence type="ECO:0000255" key="1">
    <source>
        <dbReference type="HAMAP-Rule" id="MF_00511"/>
    </source>
</evidence>
<evidence type="ECO:0000305" key="2"/>
<accession>Q980K7</accession>
<reference key="1">
    <citation type="journal article" date="2001" name="Proc. Natl. Acad. Sci. U.S.A.">
        <title>The complete genome of the crenarchaeon Sulfolobus solfataricus P2.</title>
        <authorList>
            <person name="She Q."/>
            <person name="Singh R.K."/>
            <person name="Confalonieri F."/>
            <person name="Zivanovic Y."/>
            <person name="Allard G."/>
            <person name="Awayez M.J."/>
            <person name="Chan-Weiher C.C.-Y."/>
            <person name="Clausen I.G."/>
            <person name="Curtis B.A."/>
            <person name="De Moors A."/>
            <person name="Erauso G."/>
            <person name="Fletcher C."/>
            <person name="Gordon P.M.K."/>
            <person name="Heikamp-de Jong I."/>
            <person name="Jeffries A.C."/>
            <person name="Kozera C.J."/>
            <person name="Medina N."/>
            <person name="Peng X."/>
            <person name="Thi-Ngoc H.P."/>
            <person name="Redder P."/>
            <person name="Schenk M.E."/>
            <person name="Theriault C."/>
            <person name="Tolstrup N."/>
            <person name="Charlebois R.L."/>
            <person name="Doolittle W.F."/>
            <person name="Duguet M."/>
            <person name="Gaasterland T."/>
            <person name="Garrett R.A."/>
            <person name="Ragan M.A."/>
            <person name="Sensen C.W."/>
            <person name="Van der Oost J."/>
        </authorList>
    </citation>
    <scope>NUCLEOTIDE SEQUENCE [LARGE SCALE GENOMIC DNA]</scope>
    <source>
        <strain>ATCC 35092 / DSM 1617 / JCM 11322 / P2</strain>
    </source>
</reference>
<gene>
    <name evidence="1" type="primary">rps17e</name>
    <name type="ordered locus">SSO5561</name>
</gene>
<name>RS17E_SACS2</name>
<keyword id="KW-0002">3D-structure</keyword>
<keyword id="KW-1185">Reference proteome</keyword>
<keyword id="KW-0687">Ribonucleoprotein</keyword>
<keyword id="KW-0689">Ribosomal protein</keyword>
<dbReference type="EMBL" id="AE006641">
    <property type="protein sequence ID" value="AAK40624.1"/>
    <property type="molecule type" value="Genomic_DNA"/>
</dbReference>
<dbReference type="PIR" id="A90171">
    <property type="entry name" value="A90171"/>
</dbReference>
<dbReference type="RefSeq" id="WP_009990569.1">
    <property type="nucleotide sequence ID" value="NC_002754.1"/>
</dbReference>
<dbReference type="PDB" id="9FHL">
    <property type="method" value="EM"/>
    <property type="resolution" value="2.50 A"/>
    <property type="chains" value="S=1-79"/>
</dbReference>
<dbReference type="PDB" id="9FRA">
    <property type="method" value="EM"/>
    <property type="resolution" value="2.80 A"/>
    <property type="chains" value="S=1-79"/>
</dbReference>
<dbReference type="PDB" id="9FRK">
    <property type="method" value="EM"/>
    <property type="resolution" value="3.00 A"/>
    <property type="chains" value="S=1-79"/>
</dbReference>
<dbReference type="PDB" id="9FRL">
    <property type="method" value="EM"/>
    <property type="resolution" value="2.97 A"/>
    <property type="chains" value="S=1-79"/>
</dbReference>
<dbReference type="PDB" id="9FS6">
    <property type="method" value="EM"/>
    <property type="resolution" value="2.90 A"/>
    <property type="chains" value="S=1-79"/>
</dbReference>
<dbReference type="PDB" id="9FS8">
    <property type="method" value="EM"/>
    <property type="resolution" value="3.70 A"/>
    <property type="chains" value="S=1-79"/>
</dbReference>
<dbReference type="PDB" id="9FSF">
    <property type="method" value="EM"/>
    <property type="resolution" value="2.80 A"/>
    <property type="chains" value="S=1-79"/>
</dbReference>
<dbReference type="PDB" id="9FY0">
    <property type="method" value="EM"/>
    <property type="resolution" value="2.90 A"/>
    <property type="chains" value="S=1-79"/>
</dbReference>
<dbReference type="PDBsum" id="9FHL"/>
<dbReference type="PDBsum" id="9FRA"/>
<dbReference type="PDBsum" id="9FRK"/>
<dbReference type="PDBsum" id="9FRL"/>
<dbReference type="PDBsum" id="9FS6"/>
<dbReference type="PDBsum" id="9FS8"/>
<dbReference type="PDBsum" id="9FSF"/>
<dbReference type="PDBsum" id="9FY0"/>
<dbReference type="EMDB" id="EMD-50445"/>
<dbReference type="EMDB" id="EMD-50709"/>
<dbReference type="EMDB" id="EMD-50716"/>
<dbReference type="EMDB" id="EMD-50717"/>
<dbReference type="EMDB" id="EMD-50724"/>
<dbReference type="EMDB" id="EMD-50725"/>
<dbReference type="EMDB" id="EMD-50727"/>
<dbReference type="EMDB" id="EMD-50854"/>
<dbReference type="SMR" id="Q980K7"/>
<dbReference type="FunCoup" id="Q980K7">
    <property type="interactions" value="88"/>
</dbReference>
<dbReference type="STRING" id="273057.SSO5561"/>
<dbReference type="PaxDb" id="273057-SSO5561"/>
<dbReference type="EnsemblBacteria" id="AAK40624">
    <property type="protein sequence ID" value="AAK40624"/>
    <property type="gene ID" value="SSO5561"/>
</dbReference>
<dbReference type="KEGG" id="sso:SSO5561"/>
<dbReference type="PATRIC" id="fig|273057.12.peg.280"/>
<dbReference type="eggNOG" id="arCOG01885">
    <property type="taxonomic scope" value="Archaea"/>
</dbReference>
<dbReference type="HOGENOM" id="CLU_176720_0_0_2"/>
<dbReference type="InParanoid" id="Q980K7"/>
<dbReference type="PhylomeDB" id="Q980K7"/>
<dbReference type="Proteomes" id="UP000001974">
    <property type="component" value="Chromosome"/>
</dbReference>
<dbReference type="GO" id="GO:0005829">
    <property type="term" value="C:cytosol"/>
    <property type="evidence" value="ECO:0007669"/>
    <property type="project" value="UniProtKB-ARBA"/>
</dbReference>
<dbReference type="GO" id="GO:1990904">
    <property type="term" value="C:ribonucleoprotein complex"/>
    <property type="evidence" value="ECO:0007669"/>
    <property type="project" value="UniProtKB-KW"/>
</dbReference>
<dbReference type="GO" id="GO:0005840">
    <property type="term" value="C:ribosome"/>
    <property type="evidence" value="ECO:0007669"/>
    <property type="project" value="UniProtKB-KW"/>
</dbReference>
<dbReference type="GO" id="GO:0003735">
    <property type="term" value="F:structural constituent of ribosome"/>
    <property type="evidence" value="ECO:0007669"/>
    <property type="project" value="InterPro"/>
</dbReference>
<dbReference type="GO" id="GO:0006412">
    <property type="term" value="P:translation"/>
    <property type="evidence" value="ECO:0007669"/>
    <property type="project" value="UniProtKB-UniRule"/>
</dbReference>
<dbReference type="Gene3D" id="1.10.60.20">
    <property type="entry name" value="Ribosomal protein S17e-like"/>
    <property type="match status" value="1"/>
</dbReference>
<dbReference type="HAMAP" id="MF_00511">
    <property type="entry name" value="Ribosomal_eS17"/>
    <property type="match status" value="1"/>
</dbReference>
<dbReference type="InterPro" id="IPR001210">
    <property type="entry name" value="Ribosomal_eS17"/>
</dbReference>
<dbReference type="InterPro" id="IPR018273">
    <property type="entry name" value="Ribosomal_eS17_CS"/>
</dbReference>
<dbReference type="InterPro" id="IPR036401">
    <property type="entry name" value="Ribosomal_eS17_sf"/>
</dbReference>
<dbReference type="NCBIfam" id="NF002242">
    <property type="entry name" value="PRK01151.1"/>
    <property type="match status" value="1"/>
</dbReference>
<dbReference type="PANTHER" id="PTHR10732">
    <property type="entry name" value="40S RIBOSOMAL PROTEIN S17"/>
    <property type="match status" value="1"/>
</dbReference>
<dbReference type="PANTHER" id="PTHR10732:SF0">
    <property type="entry name" value="40S RIBOSOMAL PROTEIN S17"/>
    <property type="match status" value="1"/>
</dbReference>
<dbReference type="Pfam" id="PF00833">
    <property type="entry name" value="Ribosomal_S17e"/>
    <property type="match status" value="1"/>
</dbReference>
<dbReference type="SUPFAM" id="SSF116820">
    <property type="entry name" value="Rps17e-like"/>
    <property type="match status" value="1"/>
</dbReference>
<dbReference type="PROSITE" id="PS00712">
    <property type="entry name" value="RIBOSOMAL_S17E"/>
    <property type="match status" value="1"/>
</dbReference>
<protein>
    <recommendedName>
        <fullName evidence="1">Small ribosomal subunit protein eS17</fullName>
    </recommendedName>
    <alternativeName>
        <fullName evidence="2">30S ribosomal protein S17e</fullName>
    </alternativeName>
</protein>
<proteinExistence type="evidence at protein level"/>
<feature type="chain" id="PRO_0000141566" description="Small ribosomal subunit protein eS17">
    <location>
        <begin position="1"/>
        <end position="79"/>
    </location>
</feature>
<comment type="similarity">
    <text evidence="1">Belongs to the eukaryotic ribosomal protein eS17 family.</text>
</comment>
<sequence>MGNIYTKDIKRIVKEIYDRYKDEIKDDYNTNKQIVIRYVDVKSKKVRNRIAGYLTRYYKIMKEKETSPAEEKEEISEEI</sequence>